<protein>
    <recommendedName>
        <fullName evidence="2">Probable translation initiation factor IF-2</fullName>
    </recommendedName>
</protein>
<gene>
    <name evidence="2" type="primary">infB</name>
    <name type="ordered locus">Mbar_A3384</name>
</gene>
<feature type="chain" id="PRO_0000228266" description="Probable translation initiation factor IF-2">
    <location>
        <begin position="1"/>
        <end position="591"/>
    </location>
</feature>
<feature type="domain" description="tr-type G">
    <location>
        <begin position="7"/>
        <end position="223"/>
    </location>
</feature>
<feature type="region of interest" description="G1" evidence="1">
    <location>
        <begin position="16"/>
        <end position="23"/>
    </location>
</feature>
<feature type="region of interest" description="G2" evidence="1">
    <location>
        <begin position="41"/>
        <end position="45"/>
    </location>
</feature>
<feature type="region of interest" description="G3" evidence="1">
    <location>
        <begin position="78"/>
        <end position="81"/>
    </location>
</feature>
<feature type="region of interest" description="G4" evidence="1">
    <location>
        <begin position="132"/>
        <end position="135"/>
    </location>
</feature>
<feature type="region of interest" description="G5" evidence="1">
    <location>
        <begin position="200"/>
        <end position="202"/>
    </location>
</feature>
<feature type="binding site" evidence="2">
    <location>
        <begin position="16"/>
        <end position="23"/>
    </location>
    <ligand>
        <name>GTP</name>
        <dbReference type="ChEBI" id="CHEBI:37565"/>
    </ligand>
</feature>
<feature type="binding site" evidence="2">
    <location>
        <begin position="78"/>
        <end position="82"/>
    </location>
    <ligand>
        <name>GTP</name>
        <dbReference type="ChEBI" id="CHEBI:37565"/>
    </ligand>
</feature>
<feature type="binding site" evidence="2">
    <location>
        <begin position="132"/>
        <end position="135"/>
    </location>
    <ligand>
        <name>GTP</name>
        <dbReference type="ChEBI" id="CHEBI:37565"/>
    </ligand>
</feature>
<evidence type="ECO:0000250" key="1"/>
<evidence type="ECO:0000255" key="2">
    <source>
        <dbReference type="HAMAP-Rule" id="MF_00100"/>
    </source>
</evidence>
<dbReference type="EMBL" id="CP000099">
    <property type="protein sequence ID" value="AAZ72257.1"/>
    <property type="molecule type" value="Genomic_DNA"/>
</dbReference>
<dbReference type="SMR" id="Q466D5"/>
<dbReference type="STRING" id="269797.Mbar_A3384"/>
<dbReference type="PaxDb" id="269797-Mbar_A3384"/>
<dbReference type="KEGG" id="mba:Mbar_A3384"/>
<dbReference type="eggNOG" id="arCOG01560">
    <property type="taxonomic scope" value="Archaea"/>
</dbReference>
<dbReference type="HOGENOM" id="CLU_002656_3_3_2"/>
<dbReference type="OrthoDB" id="30957at2157"/>
<dbReference type="GO" id="GO:0005737">
    <property type="term" value="C:cytoplasm"/>
    <property type="evidence" value="ECO:0007669"/>
    <property type="project" value="TreeGrafter"/>
</dbReference>
<dbReference type="GO" id="GO:0005525">
    <property type="term" value="F:GTP binding"/>
    <property type="evidence" value="ECO:0007669"/>
    <property type="project" value="UniProtKB-KW"/>
</dbReference>
<dbReference type="GO" id="GO:0003924">
    <property type="term" value="F:GTPase activity"/>
    <property type="evidence" value="ECO:0007669"/>
    <property type="project" value="UniProtKB-UniRule"/>
</dbReference>
<dbReference type="GO" id="GO:0003743">
    <property type="term" value="F:translation initiation factor activity"/>
    <property type="evidence" value="ECO:0007669"/>
    <property type="project" value="UniProtKB-UniRule"/>
</dbReference>
<dbReference type="CDD" id="cd03703">
    <property type="entry name" value="aeIF5B_II"/>
    <property type="match status" value="1"/>
</dbReference>
<dbReference type="CDD" id="cd16266">
    <property type="entry name" value="IF2_aeIF5B_IV"/>
    <property type="match status" value="1"/>
</dbReference>
<dbReference type="CDD" id="cd01887">
    <property type="entry name" value="IF2_eIF5B"/>
    <property type="match status" value="1"/>
</dbReference>
<dbReference type="FunFam" id="3.40.50.300:FF:000112">
    <property type="entry name" value="Eukaryotic translation initiation factor 5B"/>
    <property type="match status" value="1"/>
</dbReference>
<dbReference type="FunFam" id="2.40.30.10:FF:000013">
    <property type="entry name" value="eukaryotic translation initiation factor 5B"/>
    <property type="match status" value="1"/>
</dbReference>
<dbReference type="FunFam" id="2.40.30.10:FF:000152">
    <property type="entry name" value="Probable translation initiation factor IF-2"/>
    <property type="match status" value="1"/>
</dbReference>
<dbReference type="FunFam" id="3.40.50.10050:FF:000001">
    <property type="entry name" value="Translation initiation factor IF-2"/>
    <property type="match status" value="1"/>
</dbReference>
<dbReference type="Gene3D" id="3.40.50.300">
    <property type="entry name" value="P-loop containing nucleotide triphosphate hydrolases"/>
    <property type="match status" value="1"/>
</dbReference>
<dbReference type="Gene3D" id="2.40.30.10">
    <property type="entry name" value="Translation factors"/>
    <property type="match status" value="2"/>
</dbReference>
<dbReference type="Gene3D" id="3.40.50.10050">
    <property type="entry name" value="Translation initiation factor IF- 2, domain 3"/>
    <property type="match status" value="1"/>
</dbReference>
<dbReference type="HAMAP" id="MF_00100_A">
    <property type="entry name" value="IF_2_A"/>
    <property type="match status" value="1"/>
</dbReference>
<dbReference type="InterPro" id="IPR004161">
    <property type="entry name" value="EFTu-like_2"/>
</dbReference>
<dbReference type="InterPro" id="IPR029459">
    <property type="entry name" value="EFTU-type"/>
</dbReference>
<dbReference type="InterPro" id="IPR027417">
    <property type="entry name" value="P-loop_NTPase"/>
</dbReference>
<dbReference type="InterPro" id="IPR005225">
    <property type="entry name" value="Small_GTP-bd"/>
</dbReference>
<dbReference type="InterPro" id="IPR000795">
    <property type="entry name" value="T_Tr_GTP-bd_dom"/>
</dbReference>
<dbReference type="InterPro" id="IPR004544">
    <property type="entry name" value="TF_aIF-2_arc"/>
</dbReference>
<dbReference type="InterPro" id="IPR015760">
    <property type="entry name" value="TIF_IF2"/>
</dbReference>
<dbReference type="InterPro" id="IPR023115">
    <property type="entry name" value="TIF_IF2_dom3"/>
</dbReference>
<dbReference type="InterPro" id="IPR036925">
    <property type="entry name" value="TIF_IF2_dom3_sf"/>
</dbReference>
<dbReference type="InterPro" id="IPR009000">
    <property type="entry name" value="Transl_B-barrel_sf"/>
</dbReference>
<dbReference type="NCBIfam" id="TIGR00491">
    <property type="entry name" value="aIF-2"/>
    <property type="match status" value="1"/>
</dbReference>
<dbReference type="NCBIfam" id="NF003078">
    <property type="entry name" value="PRK04004.1"/>
    <property type="match status" value="1"/>
</dbReference>
<dbReference type="NCBIfam" id="NF011418">
    <property type="entry name" value="PRK14845.1"/>
    <property type="match status" value="1"/>
</dbReference>
<dbReference type="NCBIfam" id="TIGR00231">
    <property type="entry name" value="small_GTP"/>
    <property type="match status" value="1"/>
</dbReference>
<dbReference type="PANTHER" id="PTHR43381:SF4">
    <property type="entry name" value="EUKARYOTIC TRANSLATION INITIATION FACTOR 5B"/>
    <property type="match status" value="1"/>
</dbReference>
<dbReference type="PANTHER" id="PTHR43381">
    <property type="entry name" value="TRANSLATION INITIATION FACTOR IF-2-RELATED"/>
    <property type="match status" value="1"/>
</dbReference>
<dbReference type="Pfam" id="PF00009">
    <property type="entry name" value="GTP_EFTU"/>
    <property type="match status" value="1"/>
</dbReference>
<dbReference type="Pfam" id="PF03144">
    <property type="entry name" value="GTP_EFTU_D2"/>
    <property type="match status" value="1"/>
</dbReference>
<dbReference type="Pfam" id="PF14578">
    <property type="entry name" value="GTP_EFTU_D4"/>
    <property type="match status" value="1"/>
</dbReference>
<dbReference type="Pfam" id="PF11987">
    <property type="entry name" value="IF-2"/>
    <property type="match status" value="1"/>
</dbReference>
<dbReference type="PRINTS" id="PR00315">
    <property type="entry name" value="ELONGATNFCT"/>
</dbReference>
<dbReference type="SUPFAM" id="SSF52156">
    <property type="entry name" value="Initiation factor IF2/eIF5b, domain 3"/>
    <property type="match status" value="1"/>
</dbReference>
<dbReference type="SUPFAM" id="SSF52540">
    <property type="entry name" value="P-loop containing nucleoside triphosphate hydrolases"/>
    <property type="match status" value="1"/>
</dbReference>
<dbReference type="SUPFAM" id="SSF50447">
    <property type="entry name" value="Translation proteins"/>
    <property type="match status" value="1"/>
</dbReference>
<dbReference type="PROSITE" id="PS51722">
    <property type="entry name" value="G_TR_2"/>
    <property type="match status" value="1"/>
</dbReference>
<dbReference type="PROSITE" id="PS01176">
    <property type="entry name" value="IF2"/>
    <property type="match status" value="1"/>
</dbReference>
<keyword id="KW-0342">GTP-binding</keyword>
<keyword id="KW-0396">Initiation factor</keyword>
<keyword id="KW-0547">Nucleotide-binding</keyword>
<keyword id="KW-0648">Protein biosynthesis</keyword>
<name>IF2P_METBF</name>
<organism>
    <name type="scientific">Methanosarcina barkeri (strain Fusaro / DSM 804)</name>
    <dbReference type="NCBI Taxonomy" id="269797"/>
    <lineage>
        <taxon>Archaea</taxon>
        <taxon>Methanobacteriati</taxon>
        <taxon>Methanobacteriota</taxon>
        <taxon>Stenosarchaea group</taxon>
        <taxon>Methanomicrobia</taxon>
        <taxon>Methanosarcinales</taxon>
        <taxon>Methanosarcinaceae</taxon>
        <taxon>Methanosarcina</taxon>
    </lineage>
</organism>
<sequence length="591" mass="64938">MADKKNLRTPIVCVMGHVDHGKTTLLDKIRGTAIVSGEAGAITQHIGATEVPIDVIINKLGDPRLRDRFIVPGLLFIDTPGHHAFTTLRSRGGALADLAIVVVDINEGFKPQTYESLQILKRFKTPFVVVANKIDRIGGWVSQKDLPFAVTFKKQSEDVQARLETKLYEVIGELYNQGFAAERYDRVTNFQKTLGVVPVSAMTGEGIPDVLMVLLGLAQKFLEANLHYSAKGPGVGTVLEVKEEKGLGATLDVILYDGTLKKGDTVVIGSLGKPIQTKVRALLKPRELSEMRYESKFKQVNKVTAAVGVKISAPGLEGALAGSPIRVANEDTLDEIVDQIKSEIDEVRIDTGAVGIMIKADTLGSLEALVHEFQKDEVSIRKAEVGDISHRDAIEASTVEDPLYSVIIGFNVKVHPDARDFLQESTVKVFTSDVIYRLVEDYQKYVKEQQEQAEKRIFETIIRPGKFKILPGCIFRQSKPAVVGIRVLGGVVRTNADVMLENGNVVGKIKGLQIEGENIPSAGVGKEVAMAIEGATVGRQIKEEDVLYVNVPERHAKVLEHEIYDSLSTDEKETLDIFLSLKRKDNPFWAK</sequence>
<reference key="1">
    <citation type="journal article" date="2006" name="J. Bacteriol.">
        <title>The Methanosarcina barkeri genome: comparative analysis with Methanosarcina acetivorans and Methanosarcina mazei reveals extensive rearrangement within methanosarcinal genomes.</title>
        <authorList>
            <person name="Maeder D.L."/>
            <person name="Anderson I."/>
            <person name="Brettin T.S."/>
            <person name="Bruce D.C."/>
            <person name="Gilna P."/>
            <person name="Han C.S."/>
            <person name="Lapidus A."/>
            <person name="Metcalf W.W."/>
            <person name="Saunders E."/>
            <person name="Tapia R."/>
            <person name="Sowers K.R."/>
        </authorList>
    </citation>
    <scope>NUCLEOTIDE SEQUENCE [LARGE SCALE GENOMIC DNA]</scope>
    <source>
        <strain>Fusaro / DSM 804</strain>
    </source>
</reference>
<proteinExistence type="inferred from homology"/>
<accession>Q466D5</accession>
<comment type="function">
    <text evidence="2">Function in general translation initiation by promoting the binding of the formylmethionine-tRNA to ribosomes. Seems to function along with eIF-2.</text>
</comment>
<comment type="similarity">
    <text evidence="2">Belongs to the TRAFAC class translation factor GTPase superfamily. Classic translation factor GTPase family. IF-2 subfamily.</text>
</comment>